<reference key="1">
    <citation type="journal article" date="1991" name="Nucleic Acids Res.">
        <title>Complete nucleotide sequence of Friend murine leukemia virus, strain FB29.</title>
        <authorList>
            <person name="Perryman S."/>
            <person name="Nishio J."/>
            <person name="Chesebro B."/>
        </authorList>
    </citation>
    <scope>NUCLEOTIDE SEQUENCE [GENOMIC DNA]</scope>
</reference>
<comment type="function">
    <text evidence="1">The surface protein (SU) attaches the virus to the host cell by binding to its receptor. This interaction triggers the refolding of the transmembrane protein (TM) and is thought to activate its fusogenic potential by unmasking its fusion peptide. Fusion occurs at the host cell plasma membrane (By similarity).</text>
</comment>
<comment type="function">
    <text evidence="1">The transmembrane protein (TM) acts as a class I viral fusion protein. Under the current model, the protein has at least 3 conformational states: pre-fusion native state, pre-hairpin intermediate state, and post-fusion hairpin state. During viral and target cell membrane fusion, the coiled coil regions (heptad repeats) assume a trimer-of-hairpins structure, positioning the fusion peptide in close proximity to the C-terminal region of the ectodomain. The formation of this structure appears to drive apposition and subsequent fusion of viral and target cell membranes. Membranes fusion leads to delivery of the nucleocapsid into the cytoplasm (By similarity).</text>
</comment>
<comment type="subunit">
    <text evidence="1">The mature envelope protein (Env) consists of a trimer of SU-TM heterodimers attached by a labile interchain disulfide bond.</text>
</comment>
<comment type="subcellular location">
    <molecule>Transmembrane protein</molecule>
    <subcellularLocation>
        <location evidence="1">Virion membrane</location>
        <topology evidence="1">Single-pass type I membrane protein</topology>
    </subcellularLocation>
    <subcellularLocation>
        <location evidence="1">Host cell membrane</location>
        <topology evidence="1">Single-pass type I membrane protein</topology>
    </subcellularLocation>
</comment>
<comment type="subcellular location">
    <molecule>Surface protein</molecule>
    <subcellularLocation>
        <location>Virion membrane</location>
        <topology>Peripheral membrane protein</topology>
    </subcellularLocation>
    <subcellularLocation>
        <location evidence="1">Host cell membrane</location>
        <topology evidence="1">Peripheral membrane protein</topology>
    </subcellularLocation>
    <text evidence="1">The surface protein is not anchored to the viral envelope, but associates with the virion surface through its binding to TM. Both proteins are thought to be concentrated at the site of budding and incorporated into the virions possibly by contacts between the cytoplasmic tail of Env and the N-terminus of Gag (By similarity).</text>
</comment>
<comment type="subcellular location">
    <molecule>R-peptide</molecule>
    <subcellularLocation>
        <location evidence="1">Host cell membrane</location>
        <topology evidence="1">Peripheral membrane protein</topology>
    </subcellularLocation>
    <text evidence="1">The R-peptide is membrane-associated through its palmitate.</text>
</comment>
<comment type="domain">
    <text>The YXXL motif is involved in determining the exact site of viral release at the surface of infected mononuclear cells and promotes endocytosis.</text>
</comment>
<comment type="domain">
    <text evidence="1">The 17 amino acids long immunosuppressive region is present in many retroviral envelope proteins. Synthetic peptides derived from this relatively conserved sequence inhibit immune function in vitro and in vivo (By similarity).</text>
</comment>
<comment type="PTM">
    <text evidence="1">Specific enzymatic cleavages in vivo yield mature proteins. Envelope glycoproteins are synthesized as an inactive precursor that is N-glycosylated and processed likely by host cell furin or by a furin-like protease in the Golgi to yield the mature SU and TM proteins. The cleavage site between SU and TM requires the minimal sequence [KR]-X-[KR]-R. The R-peptide is released from the C-terminus of the cytoplasmic tail of the TM protein upon particle formation as a result of proteolytic cleavage by the viral protease. Cleavage of this peptide is required for TM to become fusogenic (By similarity).</text>
</comment>
<comment type="PTM">
    <text evidence="1">The CXXC motif is highly conserved across a broad range of retroviral envelope proteins. It is thought to participate in the formation of a labile disulfide bond possibly with the CX6CC motif present in the transmembrane protein. Isomerization of the intersubunit disulfide bond to an SU intrachain disulfide bond is thought to occur upon receptor recognition in order to allow membrane fusion (By similarity).</text>
</comment>
<comment type="PTM">
    <text evidence="1">The transmembrane protein is palmitoylated.</text>
</comment>
<comment type="PTM">
    <text evidence="1">The R-peptide is palmitoylated.</text>
</comment>
<name>ENV_MLVFF</name>
<protein>
    <recommendedName>
        <fullName>Envelope glycoprotein</fullName>
    </recommendedName>
    <alternativeName>
        <fullName>Env polyprotein</fullName>
    </alternativeName>
    <component>
        <recommendedName>
            <fullName>Surface protein</fullName>
            <shortName>SU</shortName>
        </recommendedName>
        <alternativeName>
            <fullName>Glycoprotein 70</fullName>
            <shortName>gp70</shortName>
        </alternativeName>
    </component>
    <component>
        <recommendedName>
            <fullName>Transmembrane protein</fullName>
            <shortName>TM</shortName>
        </recommendedName>
        <alternativeName>
            <fullName>Envelope protein p15E</fullName>
        </alternativeName>
    </component>
    <component>
        <recommendedName>
            <fullName>R-peptide</fullName>
        </recommendedName>
        <alternativeName>
            <fullName>p2E</fullName>
        </alternativeName>
    </component>
</protein>
<accession>P26804</accession>
<gene>
    <name type="primary">env</name>
</gene>
<dbReference type="EMBL" id="Z11128">
    <property type="protein sequence ID" value="CAA77479.1"/>
    <property type="molecule type" value="Genomic_DNA"/>
</dbReference>
<dbReference type="PIR" id="S70395">
    <property type="entry name" value="S70395"/>
</dbReference>
<dbReference type="RefSeq" id="NP_040334.1">
    <property type="nucleotide sequence ID" value="NC_001362.1"/>
</dbReference>
<dbReference type="SMR" id="P26804"/>
<dbReference type="GlyCosmos" id="P26804">
    <property type="glycosylation" value="7 sites, No reported glycans"/>
</dbReference>
<dbReference type="GeneID" id="1491875"/>
<dbReference type="KEGG" id="vg:1491875"/>
<dbReference type="Proteomes" id="UP000008877">
    <property type="component" value="Segment"/>
</dbReference>
<dbReference type="GO" id="GO:0020002">
    <property type="term" value="C:host cell plasma membrane"/>
    <property type="evidence" value="ECO:0007669"/>
    <property type="project" value="UniProtKB-SubCell"/>
</dbReference>
<dbReference type="GO" id="GO:0016020">
    <property type="term" value="C:membrane"/>
    <property type="evidence" value="ECO:0007669"/>
    <property type="project" value="UniProtKB-KW"/>
</dbReference>
<dbReference type="GO" id="GO:0019031">
    <property type="term" value="C:viral envelope"/>
    <property type="evidence" value="ECO:0007669"/>
    <property type="project" value="UniProtKB-KW"/>
</dbReference>
<dbReference type="GO" id="GO:0055036">
    <property type="term" value="C:virion membrane"/>
    <property type="evidence" value="ECO:0007669"/>
    <property type="project" value="UniProtKB-SubCell"/>
</dbReference>
<dbReference type="GO" id="GO:0046872">
    <property type="term" value="F:metal ion binding"/>
    <property type="evidence" value="ECO:0007669"/>
    <property type="project" value="UniProtKB-KW"/>
</dbReference>
<dbReference type="GO" id="GO:0019064">
    <property type="term" value="P:fusion of virus membrane with host plasma membrane"/>
    <property type="evidence" value="ECO:0007669"/>
    <property type="project" value="UniProtKB-KW"/>
</dbReference>
<dbReference type="GO" id="GO:0046718">
    <property type="term" value="P:symbiont entry into host cell"/>
    <property type="evidence" value="ECO:0007669"/>
    <property type="project" value="UniProtKB-KW"/>
</dbReference>
<dbReference type="GO" id="GO:0019062">
    <property type="term" value="P:virion attachment to host cell"/>
    <property type="evidence" value="ECO:0007669"/>
    <property type="project" value="UniProtKB-KW"/>
</dbReference>
<dbReference type="CDD" id="cd09851">
    <property type="entry name" value="HTLV-1-like_HR1-HR2"/>
    <property type="match status" value="1"/>
</dbReference>
<dbReference type="FunFam" id="1.10.287.210:FF:000005">
    <property type="entry name" value="Envelope glycoprotein"/>
    <property type="match status" value="1"/>
</dbReference>
<dbReference type="Gene3D" id="1.10.287.210">
    <property type="match status" value="1"/>
</dbReference>
<dbReference type="Gene3D" id="3.90.310.10">
    <property type="entry name" value="ENV polyprotein, receptor-binding domain"/>
    <property type="match status" value="1"/>
</dbReference>
<dbReference type="InterPro" id="IPR008981">
    <property type="entry name" value="FMuLV_rcpt-bd"/>
</dbReference>
<dbReference type="InterPro" id="IPR018154">
    <property type="entry name" value="TLV/ENV_coat_polyprotein"/>
</dbReference>
<dbReference type="PANTHER" id="PTHR10424:SF72">
    <property type="entry name" value="BC035947 PROTEIN-RELATED"/>
    <property type="match status" value="1"/>
</dbReference>
<dbReference type="PANTHER" id="PTHR10424">
    <property type="entry name" value="VIRAL ENVELOPE PROTEIN"/>
    <property type="match status" value="1"/>
</dbReference>
<dbReference type="Pfam" id="PF00429">
    <property type="entry name" value="TLV_coat"/>
    <property type="match status" value="1"/>
</dbReference>
<dbReference type="SUPFAM" id="SSF49830">
    <property type="entry name" value="ENV polyprotein, receptor-binding domain"/>
    <property type="match status" value="1"/>
</dbReference>
<dbReference type="SUPFAM" id="SSF58069">
    <property type="entry name" value="Virus ectodomain"/>
    <property type="match status" value="1"/>
</dbReference>
<organism>
    <name type="scientific">Friend murine leukemia virus (isolate FB29)</name>
    <name type="common">FrMLV</name>
    <dbReference type="NCBI Taxonomy" id="11797"/>
    <lineage>
        <taxon>Viruses</taxon>
        <taxon>Riboviria</taxon>
        <taxon>Pararnavirae</taxon>
        <taxon>Artverviricota</taxon>
        <taxon>Revtraviricetes</taxon>
        <taxon>Ortervirales</taxon>
        <taxon>Retroviridae</taxon>
        <taxon>Orthoretrovirinae</taxon>
        <taxon>Gammaretrovirus</taxon>
        <taxon>Murine leukemia virus</taxon>
    </lineage>
</organism>
<evidence type="ECO:0000250" key="1"/>
<evidence type="ECO:0000255" key="2"/>
<evidence type="ECO:0000256" key="3">
    <source>
        <dbReference type="SAM" id="MobiDB-lite"/>
    </source>
</evidence>
<organismHost>
    <name type="scientific">Mus musculus</name>
    <name type="common">Mouse</name>
    <dbReference type="NCBI Taxonomy" id="10090"/>
</organismHost>
<proteinExistence type="evidence at protein level"/>
<feature type="signal peptide" evidence="2">
    <location>
        <begin position="1"/>
        <end position="34"/>
    </location>
</feature>
<feature type="chain" id="PRO_0000239582" description="Envelope glycoprotein">
    <location>
        <begin position="35"/>
        <end position="676"/>
    </location>
</feature>
<feature type="chain" id="PRO_0000040754" description="Surface protein" evidence="1">
    <location>
        <begin position="35"/>
        <end position="479"/>
    </location>
</feature>
<feature type="chain" id="PRO_0000040755" description="Transmembrane protein" evidence="1">
    <location>
        <begin position="480"/>
        <end position="659"/>
    </location>
</feature>
<feature type="peptide" id="PRO_0000040756" description="R-peptide" evidence="1">
    <location>
        <begin position="660"/>
        <end position="676"/>
    </location>
</feature>
<feature type="topological domain" description="Extracellular" evidence="2">
    <location>
        <begin position="35"/>
        <end position="620"/>
    </location>
</feature>
<feature type="transmembrane region" description="Helical" evidence="2">
    <location>
        <begin position="621"/>
        <end position="641"/>
    </location>
</feature>
<feature type="topological domain" description="Cytoplasmic" evidence="2">
    <location>
        <begin position="642"/>
        <end position="676"/>
    </location>
</feature>
<feature type="region of interest" description="Receptor-binding domain (RBD)" evidence="2">
    <location>
        <begin position="35"/>
        <end position="270"/>
    </location>
</feature>
<feature type="region of interest" description="Disordered" evidence="3">
    <location>
        <begin position="287"/>
        <end position="321"/>
    </location>
</feature>
<feature type="region of interest" description="Fusion peptide" evidence="1">
    <location>
        <begin position="482"/>
        <end position="502"/>
    </location>
</feature>
<feature type="region of interest" description="Immunosuppression" evidence="1">
    <location>
        <begin position="548"/>
        <end position="564"/>
    </location>
</feature>
<feature type="coiled-coil region" evidence="2">
    <location>
        <begin position="513"/>
        <end position="547"/>
    </location>
</feature>
<feature type="short sequence motif" description="CXXC">
    <location>
        <begin position="346"/>
        <end position="349"/>
    </location>
</feature>
<feature type="short sequence motif" description="CX6CC">
    <location>
        <begin position="565"/>
        <end position="573"/>
    </location>
</feature>
<feature type="short sequence motif" description="YXXL motif; contains endocytosis signal" evidence="1">
    <location>
        <begin position="665"/>
        <end position="668"/>
    </location>
</feature>
<feature type="compositionally biased region" description="Low complexity" evidence="3">
    <location>
        <begin position="296"/>
        <end position="308"/>
    </location>
</feature>
<feature type="compositionally biased region" description="Pro residues" evidence="3">
    <location>
        <begin position="309"/>
        <end position="318"/>
    </location>
</feature>
<feature type="binding site" evidence="1">
    <location>
        <position position="89"/>
    </location>
    <ligand>
        <name>Zn(2+)</name>
        <dbReference type="ChEBI" id="CHEBI:29105"/>
    </ligand>
</feature>
<feature type="binding site" evidence="1">
    <location>
        <position position="120"/>
    </location>
    <ligand>
        <name>Zn(2+)</name>
        <dbReference type="ChEBI" id="CHEBI:29105"/>
    </ligand>
</feature>
<feature type="site" description="Cleavage; by host" evidence="1">
    <location>
        <begin position="479"/>
        <end position="480"/>
    </location>
</feature>
<feature type="site" description="Cleavage; by viral protease p14" evidence="1">
    <location>
        <begin position="659"/>
        <end position="660"/>
    </location>
</feature>
<feature type="lipid moiety-binding region" description="S-palmitoyl cysteine; by host" evidence="1">
    <location>
        <position position="640"/>
    </location>
</feature>
<feature type="glycosylation site" description="N-linked (GlcNAc...) asparagine; by host" evidence="1">
    <location>
        <position position="46"/>
    </location>
</feature>
<feature type="glycosylation site" description="N-linked (GlcNAc...) asparagine; by host" evidence="1">
    <location>
        <position position="202"/>
    </location>
</feature>
<feature type="glycosylation site" description="N-linked (GlcNAc...) asparagine; by host" evidence="1">
    <location>
        <position position="336"/>
    </location>
</feature>
<feature type="glycosylation site" description="N-linked (GlcNAc...) asparagine; by host" evidence="2">
    <location>
        <position position="368"/>
    </location>
</feature>
<feature type="glycosylation site" description="N-linked (GlcNAc...) asparagine; by host" evidence="2">
    <location>
        <position position="375"/>
    </location>
</feature>
<feature type="glycosylation site" description="N-linked (GlcNAc...) asparagine; by host" evidence="2">
    <location>
        <position position="408"/>
    </location>
</feature>
<feature type="glycosylation site" description="N-linked (GlcNAc...) asparagine; by host" evidence="2">
    <location>
        <position position="444"/>
    </location>
</feature>
<feature type="disulfide bond" evidence="1">
    <location>
        <begin position="80"/>
        <end position="132"/>
    </location>
</feature>
<feature type="disulfide bond" evidence="1">
    <location>
        <begin position="106"/>
        <end position="121"/>
    </location>
</feature>
<feature type="disulfide bond" evidence="1">
    <location>
        <begin position="107"/>
        <end position="117"/>
    </location>
</feature>
<feature type="disulfide bond" evidence="1">
    <location>
        <begin position="155"/>
        <end position="175"/>
    </location>
</feature>
<feature type="disulfide bond" evidence="1">
    <location>
        <begin position="167"/>
        <end position="180"/>
    </location>
</feature>
<feature type="disulfide bond" evidence="1">
    <location>
        <begin position="212"/>
        <end position="218"/>
    </location>
</feature>
<feature type="disulfide bond" description="Interchain (between SU and TM chains, or C-349 with C-573); in linked form">
    <location>
        <begin position="346"/>
        <end position="573"/>
    </location>
</feature>
<feature type="disulfide bond">
    <location>
        <begin position="346"/>
        <end position="349"/>
    </location>
</feature>
<feature type="disulfide bond" evidence="1">
    <location>
        <begin position="376"/>
        <end position="430"/>
    </location>
</feature>
<feature type="disulfide bond" evidence="1">
    <location>
        <begin position="395"/>
        <end position="407"/>
    </location>
</feature>
<feature type="disulfide bond" evidence="1">
    <location>
        <begin position="437"/>
        <end position="450"/>
    </location>
</feature>
<feature type="disulfide bond" evidence="1">
    <location>
        <begin position="565"/>
        <end position="572"/>
    </location>
</feature>
<keyword id="KW-0165">Cleavage on pair of basic residues</keyword>
<keyword id="KW-0175">Coiled coil</keyword>
<keyword id="KW-1015">Disulfide bond</keyword>
<keyword id="KW-1169">Fusion of virus membrane with host cell membrane</keyword>
<keyword id="KW-1168">Fusion of virus membrane with host membrane</keyword>
<keyword id="KW-0325">Glycoprotein</keyword>
<keyword id="KW-1032">Host cell membrane</keyword>
<keyword id="KW-1043">Host membrane</keyword>
<keyword id="KW-0945">Host-virus interaction</keyword>
<keyword id="KW-0449">Lipoprotein</keyword>
<keyword id="KW-0472">Membrane</keyword>
<keyword id="KW-0479">Metal-binding</keyword>
<keyword id="KW-0564">Palmitate</keyword>
<keyword id="KW-0732">Signal</keyword>
<keyword id="KW-0812">Transmembrane</keyword>
<keyword id="KW-1133">Transmembrane helix</keyword>
<keyword id="KW-1161">Viral attachment to host cell</keyword>
<keyword id="KW-0261">Viral envelope protein</keyword>
<keyword id="KW-1162">Viral penetration into host cytoplasm</keyword>
<keyword id="KW-0946">Virion</keyword>
<keyword id="KW-1160">Virus entry into host cell</keyword>
<keyword id="KW-0862">Zinc</keyword>
<sequence>MACSTLSKSPKDKIDPRDLLIPLILFLSLKGARSAAPGSSPHQVYNITWEVTNGDRETVWAISGNHPLWTWWPVLTPDLCMLALSGPPHWGLEYQAPYSSPPGPPCCSGSSGNVAGCARDCNEPLTSLTPRCNTAWNRLKLDQVTHKSSEGFYVCPGSHRPREAKSCGGPDSFYCASWGCETTGRVYWKPSSSWDYITVDNNLTSNQAVQVCKDNKWCNPLAIRFTNAGKQVTSWTTGHYWGLRLYVSGQDPGLTFGIRLSYQNLGPRIPIGPNPVLADQLSFPLPNPLPKPAKSPPASSSTPTLISPSPTPTQPPPAGTGDRLLNLVQGAYQALNLTNPDKTQECWLCLVSGPPYYEGVAVLGTYSNHTSAPANCSVASQHKLTLSEVTGRGLCIGTVPKTHQALCNTTLKAGKGSYYLVAPTGTMWACNTGLTPCLSATVLNRTTDYCVLVELWPRVTYHPPSYVYSQFEKSHRHKREPVSLTLALLLGGLTMGGIAAGVGTGTTALVATQQFQQLHAAVQDDLKEVEKSITNLEKSLTSLSEVVLQNRRGLDLLFLKEGGLCAALKEECCFYADHTGLVRDSMAKLRERLSQRQKLFESSQGWFEGWFNRSPWFTTLISTIMGPLIILLLILLFGPCILNRLVQFVKDRISVVQALVLTQQYHQLKPLEYEPQ</sequence>